<evidence type="ECO:0000255" key="1">
    <source>
        <dbReference type="HAMAP-Rule" id="MF_00110"/>
    </source>
</evidence>
<reference key="1">
    <citation type="submission" date="2005-08" db="EMBL/GenBank/DDBJ databases">
        <title>Complete sequence of Pelodictyon luteolum DSM 273.</title>
        <authorList>
            <consortium name="US DOE Joint Genome Institute"/>
            <person name="Copeland A."/>
            <person name="Lucas S."/>
            <person name="Lapidus A."/>
            <person name="Barry K."/>
            <person name="Detter J.C."/>
            <person name="Glavina T."/>
            <person name="Hammon N."/>
            <person name="Israni S."/>
            <person name="Pitluck S."/>
            <person name="Bryant D."/>
            <person name="Schmutz J."/>
            <person name="Larimer F."/>
            <person name="Land M."/>
            <person name="Kyrpides N."/>
            <person name="Ivanova N."/>
            <person name="Richardson P."/>
        </authorList>
    </citation>
    <scope>NUCLEOTIDE SEQUENCE [LARGE SCALE GENOMIC DNA]</scope>
    <source>
        <strain>DSM 273 / BCRC 81028 / 2530</strain>
    </source>
</reference>
<proteinExistence type="inferred from homology"/>
<gene>
    <name evidence="1" type="primary">aroB</name>
    <name type="ordered locus">Plut_1407</name>
</gene>
<comment type="function">
    <text evidence="1">Catalyzes the conversion of 3-deoxy-D-arabino-heptulosonate 7-phosphate (DAHP) to dehydroquinate (DHQ).</text>
</comment>
<comment type="catalytic activity">
    <reaction evidence="1">
        <text>7-phospho-2-dehydro-3-deoxy-D-arabino-heptonate = 3-dehydroquinate + phosphate</text>
        <dbReference type="Rhea" id="RHEA:21968"/>
        <dbReference type="ChEBI" id="CHEBI:32364"/>
        <dbReference type="ChEBI" id="CHEBI:43474"/>
        <dbReference type="ChEBI" id="CHEBI:58394"/>
        <dbReference type="EC" id="4.2.3.4"/>
    </reaction>
</comment>
<comment type="cofactor">
    <cofactor evidence="1">
        <name>Co(2+)</name>
        <dbReference type="ChEBI" id="CHEBI:48828"/>
    </cofactor>
    <cofactor evidence="1">
        <name>Zn(2+)</name>
        <dbReference type="ChEBI" id="CHEBI:29105"/>
    </cofactor>
    <text evidence="1">Binds 1 divalent metal cation per subunit. Can use either Co(2+) or Zn(2+).</text>
</comment>
<comment type="cofactor">
    <cofactor evidence="1">
        <name>NAD(+)</name>
        <dbReference type="ChEBI" id="CHEBI:57540"/>
    </cofactor>
</comment>
<comment type="pathway">
    <text evidence="1">Metabolic intermediate biosynthesis; chorismate biosynthesis; chorismate from D-erythrose 4-phosphate and phosphoenolpyruvate: step 2/7.</text>
</comment>
<comment type="subcellular location">
    <subcellularLocation>
        <location evidence="1">Cytoplasm</location>
    </subcellularLocation>
</comment>
<comment type="similarity">
    <text evidence="1">Belongs to the sugar phosphate cyclases superfamily. Dehydroquinate synthase family.</text>
</comment>
<protein>
    <recommendedName>
        <fullName evidence="1">3-dehydroquinate synthase</fullName>
        <shortName evidence="1">DHQS</shortName>
        <ecNumber evidence="1">4.2.3.4</ecNumber>
    </recommendedName>
</protein>
<accession>Q3B315</accession>
<sequence length="362" mass="39965">MSTIIVSSPVTAGLASRFKAHGLKLKTVVLFDTNTRKLFGEQVLRTLADEGFMVHELVVPAREASKSFSTAYKLYGGMIEAGVDRSWNLLAVGGGVVGDLGGFIAASYYRGIPVIQLPTTLLAMTDSSIGGKVAINHPLGKNLIGFFHLPELVLIDPSYLGTLPEREVYSGLSEVVKYGFIADSALLERLRSHFSSIVALEEPYLTDAIRRSAEIKEAVVREDFREMSGLRATLNFGHTFAHGLEKLADYRFIRHGEAVTIGMAAALSLSRRLGFLDRPSLEQGQSIIAEFRFPRGLLKKRFLDIDAPALLENMLSDKKKLDSRLRFVLLKALGEAFLLEEDVDDREVLGAIEDAKTFFRKQ</sequence>
<name>AROB_CHLL3</name>
<keyword id="KW-0028">Amino-acid biosynthesis</keyword>
<keyword id="KW-0057">Aromatic amino acid biosynthesis</keyword>
<keyword id="KW-0170">Cobalt</keyword>
<keyword id="KW-0963">Cytoplasm</keyword>
<keyword id="KW-0456">Lyase</keyword>
<keyword id="KW-0479">Metal-binding</keyword>
<keyword id="KW-0520">NAD</keyword>
<keyword id="KW-0547">Nucleotide-binding</keyword>
<keyword id="KW-1185">Reference proteome</keyword>
<keyword id="KW-0862">Zinc</keyword>
<feature type="chain" id="PRO_0000231108" description="3-dehydroquinate synthase">
    <location>
        <begin position="1"/>
        <end position="362"/>
    </location>
</feature>
<feature type="binding site" evidence="1">
    <location>
        <begin position="95"/>
        <end position="99"/>
    </location>
    <ligand>
        <name>NAD(+)</name>
        <dbReference type="ChEBI" id="CHEBI:57540"/>
    </ligand>
</feature>
<feature type="binding site" evidence="1">
    <location>
        <begin position="119"/>
        <end position="120"/>
    </location>
    <ligand>
        <name>NAD(+)</name>
        <dbReference type="ChEBI" id="CHEBI:57540"/>
    </ligand>
</feature>
<feature type="binding site" evidence="1">
    <location>
        <position position="132"/>
    </location>
    <ligand>
        <name>NAD(+)</name>
        <dbReference type="ChEBI" id="CHEBI:57540"/>
    </ligand>
</feature>
<feature type="binding site" evidence="1">
    <location>
        <position position="141"/>
    </location>
    <ligand>
        <name>NAD(+)</name>
        <dbReference type="ChEBI" id="CHEBI:57540"/>
    </ligand>
</feature>
<feature type="binding site" evidence="1">
    <location>
        <position position="174"/>
    </location>
    <ligand>
        <name>Zn(2+)</name>
        <dbReference type="ChEBI" id="CHEBI:29105"/>
    </ligand>
</feature>
<feature type="binding site" evidence="1">
    <location>
        <position position="238"/>
    </location>
    <ligand>
        <name>Zn(2+)</name>
        <dbReference type="ChEBI" id="CHEBI:29105"/>
    </ligand>
</feature>
<feature type="binding site" evidence="1">
    <location>
        <position position="255"/>
    </location>
    <ligand>
        <name>Zn(2+)</name>
        <dbReference type="ChEBI" id="CHEBI:29105"/>
    </ligand>
</feature>
<organism>
    <name type="scientific">Chlorobium luteolum (strain DSM 273 / BCRC 81028 / 2530)</name>
    <name type="common">Pelodictyon luteolum</name>
    <dbReference type="NCBI Taxonomy" id="319225"/>
    <lineage>
        <taxon>Bacteria</taxon>
        <taxon>Pseudomonadati</taxon>
        <taxon>Chlorobiota</taxon>
        <taxon>Chlorobiia</taxon>
        <taxon>Chlorobiales</taxon>
        <taxon>Chlorobiaceae</taxon>
        <taxon>Chlorobium/Pelodictyon group</taxon>
        <taxon>Pelodictyon</taxon>
    </lineage>
</organism>
<dbReference type="EC" id="4.2.3.4" evidence="1"/>
<dbReference type="EMBL" id="CP000096">
    <property type="protein sequence ID" value="ABB24266.1"/>
    <property type="molecule type" value="Genomic_DNA"/>
</dbReference>
<dbReference type="RefSeq" id="WP_011358138.1">
    <property type="nucleotide sequence ID" value="NC_007512.1"/>
</dbReference>
<dbReference type="SMR" id="Q3B315"/>
<dbReference type="STRING" id="319225.Plut_1407"/>
<dbReference type="KEGG" id="plt:Plut_1407"/>
<dbReference type="eggNOG" id="COG0337">
    <property type="taxonomic scope" value="Bacteria"/>
</dbReference>
<dbReference type="HOGENOM" id="CLU_001201_0_2_10"/>
<dbReference type="OrthoDB" id="9806583at2"/>
<dbReference type="UniPathway" id="UPA00053">
    <property type="reaction ID" value="UER00085"/>
</dbReference>
<dbReference type="Proteomes" id="UP000002709">
    <property type="component" value="Chromosome"/>
</dbReference>
<dbReference type="GO" id="GO:0005737">
    <property type="term" value="C:cytoplasm"/>
    <property type="evidence" value="ECO:0007669"/>
    <property type="project" value="UniProtKB-SubCell"/>
</dbReference>
<dbReference type="GO" id="GO:0003856">
    <property type="term" value="F:3-dehydroquinate synthase activity"/>
    <property type="evidence" value="ECO:0007669"/>
    <property type="project" value="UniProtKB-UniRule"/>
</dbReference>
<dbReference type="GO" id="GO:0046872">
    <property type="term" value="F:metal ion binding"/>
    <property type="evidence" value="ECO:0007669"/>
    <property type="project" value="UniProtKB-KW"/>
</dbReference>
<dbReference type="GO" id="GO:0000166">
    <property type="term" value="F:nucleotide binding"/>
    <property type="evidence" value="ECO:0007669"/>
    <property type="project" value="UniProtKB-KW"/>
</dbReference>
<dbReference type="GO" id="GO:0008652">
    <property type="term" value="P:amino acid biosynthetic process"/>
    <property type="evidence" value="ECO:0007669"/>
    <property type="project" value="UniProtKB-KW"/>
</dbReference>
<dbReference type="GO" id="GO:0009073">
    <property type="term" value="P:aromatic amino acid family biosynthetic process"/>
    <property type="evidence" value="ECO:0007669"/>
    <property type="project" value="UniProtKB-KW"/>
</dbReference>
<dbReference type="GO" id="GO:0009423">
    <property type="term" value="P:chorismate biosynthetic process"/>
    <property type="evidence" value="ECO:0007669"/>
    <property type="project" value="UniProtKB-UniRule"/>
</dbReference>
<dbReference type="CDD" id="cd08195">
    <property type="entry name" value="DHQS"/>
    <property type="match status" value="1"/>
</dbReference>
<dbReference type="FunFam" id="3.40.50.1970:FF:000007">
    <property type="entry name" value="Pentafunctional AROM polypeptide"/>
    <property type="match status" value="1"/>
</dbReference>
<dbReference type="Gene3D" id="3.40.50.1970">
    <property type="match status" value="1"/>
</dbReference>
<dbReference type="Gene3D" id="1.20.1090.10">
    <property type="entry name" value="Dehydroquinate synthase-like - alpha domain"/>
    <property type="match status" value="1"/>
</dbReference>
<dbReference type="HAMAP" id="MF_00110">
    <property type="entry name" value="DHQ_synthase"/>
    <property type="match status" value="1"/>
</dbReference>
<dbReference type="InterPro" id="IPR050071">
    <property type="entry name" value="Dehydroquinate_synthase"/>
</dbReference>
<dbReference type="InterPro" id="IPR016037">
    <property type="entry name" value="DHQ_synth_AroB"/>
</dbReference>
<dbReference type="InterPro" id="IPR030963">
    <property type="entry name" value="DHQ_synth_fam"/>
</dbReference>
<dbReference type="InterPro" id="IPR030960">
    <property type="entry name" value="DHQS/DOIS_N"/>
</dbReference>
<dbReference type="InterPro" id="IPR056179">
    <property type="entry name" value="DHQS_C"/>
</dbReference>
<dbReference type="NCBIfam" id="TIGR01357">
    <property type="entry name" value="aroB"/>
    <property type="match status" value="1"/>
</dbReference>
<dbReference type="PANTHER" id="PTHR43622">
    <property type="entry name" value="3-DEHYDROQUINATE SYNTHASE"/>
    <property type="match status" value="1"/>
</dbReference>
<dbReference type="PANTHER" id="PTHR43622:SF7">
    <property type="entry name" value="3-DEHYDROQUINATE SYNTHASE, CHLOROPLASTIC"/>
    <property type="match status" value="1"/>
</dbReference>
<dbReference type="Pfam" id="PF01761">
    <property type="entry name" value="DHQ_synthase"/>
    <property type="match status" value="1"/>
</dbReference>
<dbReference type="Pfam" id="PF24621">
    <property type="entry name" value="DHQS_C"/>
    <property type="match status" value="1"/>
</dbReference>
<dbReference type="PIRSF" id="PIRSF001455">
    <property type="entry name" value="DHQ_synth"/>
    <property type="match status" value="1"/>
</dbReference>
<dbReference type="SUPFAM" id="SSF56796">
    <property type="entry name" value="Dehydroquinate synthase-like"/>
    <property type="match status" value="1"/>
</dbReference>